<gene>
    <name evidence="1" type="primary">frr</name>
    <name type="ordered locus">SP70585_0984</name>
</gene>
<feature type="chain" id="PRO_1000194954" description="Ribosome-recycling factor">
    <location>
        <begin position="1"/>
        <end position="185"/>
    </location>
</feature>
<keyword id="KW-0963">Cytoplasm</keyword>
<keyword id="KW-0648">Protein biosynthesis</keyword>
<accession>C1C6S4</accession>
<reference key="1">
    <citation type="journal article" date="2010" name="Genome Biol.">
        <title>Structure and dynamics of the pan-genome of Streptococcus pneumoniae and closely related species.</title>
        <authorList>
            <person name="Donati C."/>
            <person name="Hiller N.L."/>
            <person name="Tettelin H."/>
            <person name="Muzzi A."/>
            <person name="Croucher N.J."/>
            <person name="Angiuoli S.V."/>
            <person name="Oggioni M."/>
            <person name="Dunning Hotopp J.C."/>
            <person name="Hu F.Z."/>
            <person name="Riley D.R."/>
            <person name="Covacci A."/>
            <person name="Mitchell T.J."/>
            <person name="Bentley S.D."/>
            <person name="Kilian M."/>
            <person name="Ehrlich G.D."/>
            <person name="Rappuoli R."/>
            <person name="Moxon E.R."/>
            <person name="Masignani V."/>
        </authorList>
    </citation>
    <scope>NUCLEOTIDE SEQUENCE [LARGE SCALE GENOMIC DNA]</scope>
    <source>
        <strain>70585</strain>
    </source>
</reference>
<dbReference type="EMBL" id="CP000918">
    <property type="protein sequence ID" value="ACO17299.1"/>
    <property type="molecule type" value="Genomic_DNA"/>
</dbReference>
<dbReference type="RefSeq" id="WP_001262225.1">
    <property type="nucleotide sequence ID" value="NC_012468.1"/>
</dbReference>
<dbReference type="SMR" id="C1C6S4"/>
<dbReference type="GeneID" id="45218569"/>
<dbReference type="KEGG" id="snm:SP70585_0984"/>
<dbReference type="HOGENOM" id="CLU_073981_2_0_9"/>
<dbReference type="Proteomes" id="UP000002211">
    <property type="component" value="Chromosome"/>
</dbReference>
<dbReference type="GO" id="GO:0005737">
    <property type="term" value="C:cytoplasm"/>
    <property type="evidence" value="ECO:0007669"/>
    <property type="project" value="UniProtKB-SubCell"/>
</dbReference>
<dbReference type="GO" id="GO:0043023">
    <property type="term" value="F:ribosomal large subunit binding"/>
    <property type="evidence" value="ECO:0007669"/>
    <property type="project" value="TreeGrafter"/>
</dbReference>
<dbReference type="GO" id="GO:0006415">
    <property type="term" value="P:translational termination"/>
    <property type="evidence" value="ECO:0007669"/>
    <property type="project" value="UniProtKB-UniRule"/>
</dbReference>
<dbReference type="CDD" id="cd00520">
    <property type="entry name" value="RRF"/>
    <property type="match status" value="1"/>
</dbReference>
<dbReference type="FunFam" id="1.10.132.20:FF:000001">
    <property type="entry name" value="Ribosome-recycling factor"/>
    <property type="match status" value="1"/>
</dbReference>
<dbReference type="FunFam" id="3.30.1360.40:FF:000001">
    <property type="entry name" value="Ribosome-recycling factor"/>
    <property type="match status" value="1"/>
</dbReference>
<dbReference type="Gene3D" id="3.30.1360.40">
    <property type="match status" value="1"/>
</dbReference>
<dbReference type="Gene3D" id="1.10.132.20">
    <property type="entry name" value="Ribosome-recycling factor"/>
    <property type="match status" value="1"/>
</dbReference>
<dbReference type="HAMAP" id="MF_00040">
    <property type="entry name" value="RRF"/>
    <property type="match status" value="1"/>
</dbReference>
<dbReference type="InterPro" id="IPR002661">
    <property type="entry name" value="Ribosome_recyc_fac"/>
</dbReference>
<dbReference type="InterPro" id="IPR023584">
    <property type="entry name" value="Ribosome_recyc_fac_dom"/>
</dbReference>
<dbReference type="InterPro" id="IPR036191">
    <property type="entry name" value="RRF_sf"/>
</dbReference>
<dbReference type="NCBIfam" id="TIGR00496">
    <property type="entry name" value="frr"/>
    <property type="match status" value="1"/>
</dbReference>
<dbReference type="PANTHER" id="PTHR20982:SF3">
    <property type="entry name" value="MITOCHONDRIAL RIBOSOME RECYCLING FACTOR PSEUDO 1"/>
    <property type="match status" value="1"/>
</dbReference>
<dbReference type="PANTHER" id="PTHR20982">
    <property type="entry name" value="RIBOSOME RECYCLING FACTOR"/>
    <property type="match status" value="1"/>
</dbReference>
<dbReference type="Pfam" id="PF01765">
    <property type="entry name" value="RRF"/>
    <property type="match status" value="1"/>
</dbReference>
<dbReference type="SUPFAM" id="SSF55194">
    <property type="entry name" value="Ribosome recycling factor, RRF"/>
    <property type="match status" value="1"/>
</dbReference>
<protein>
    <recommendedName>
        <fullName evidence="1">Ribosome-recycling factor</fullName>
        <shortName evidence="1">RRF</shortName>
    </recommendedName>
    <alternativeName>
        <fullName evidence="1">Ribosome-releasing factor</fullName>
    </alternativeName>
</protein>
<comment type="function">
    <text evidence="1">Responsible for the release of ribosomes from messenger RNA at the termination of protein biosynthesis. May increase the efficiency of translation by recycling ribosomes from one round of translation to another.</text>
</comment>
<comment type="subcellular location">
    <subcellularLocation>
        <location evidence="1">Cytoplasm</location>
    </subcellularLocation>
</comment>
<comment type="similarity">
    <text evidence="1">Belongs to the RRF family.</text>
</comment>
<proteinExistence type="inferred from homology"/>
<sequence>MANAIIEKAKERMTQSHQSLAREFGGIRAGRANASLLDRVHVEYYGVETPLNQIASITIPEARVLLVTPFDKSSLKDIERALNASDLGITPANDGSVIRLVIPALTEETRRDLAKEVKKVGENAKVAVRNIRRDAMDEAKKQEKAKEITEDELKTLEKDIQKVTDDAVKHIDDMTANKEKELLEV</sequence>
<evidence type="ECO:0000255" key="1">
    <source>
        <dbReference type="HAMAP-Rule" id="MF_00040"/>
    </source>
</evidence>
<name>RRF_STRP7</name>
<organism>
    <name type="scientific">Streptococcus pneumoniae (strain 70585)</name>
    <dbReference type="NCBI Taxonomy" id="488221"/>
    <lineage>
        <taxon>Bacteria</taxon>
        <taxon>Bacillati</taxon>
        <taxon>Bacillota</taxon>
        <taxon>Bacilli</taxon>
        <taxon>Lactobacillales</taxon>
        <taxon>Streptococcaceae</taxon>
        <taxon>Streptococcus</taxon>
    </lineage>
</organism>